<proteinExistence type="evidence at protein level"/>
<sequence length="187" mass="20553">MASTADFKNGLVLQIDGQLWQIVEFQHVKPGKGPAFVRTKLKNVVSGKVVDKTYNAGVKVETATVDRRDATYLYRDGSDFVFMDSEDFEQHPLPESLVGRLADFLLESMPVQIAFHDGTPLYLELPVSVELEVTHTEPGLQGDRSSAGTKPATVETGAEIQVPLFINTGDRLKVDTRDGSYLGRVNA</sequence>
<protein>
    <recommendedName>
        <fullName evidence="1">Elongation factor P</fullName>
        <shortName evidence="1">EF-P</shortName>
    </recommendedName>
</protein>
<name>EFP_MYCS2</name>
<comment type="function">
    <text evidence="1">Involved in peptide bond synthesis. Stimulates efficient translation and peptide-bond synthesis on native or reconstituted 70S ribosomes in vitro. Probably functions indirectly by altering the affinity of the ribosome for aminoacyl-tRNA, thus increasing their reactivity as acceptors for peptidyl transferase.</text>
</comment>
<comment type="pathway">
    <text evidence="1">Protein biosynthesis; polypeptide chain elongation.</text>
</comment>
<comment type="subcellular location">
    <subcellularLocation>
        <location evidence="1">Cytoplasm</location>
    </subcellularLocation>
</comment>
<comment type="similarity">
    <text evidence="1">Belongs to the elongation factor P family.</text>
</comment>
<dbReference type="EMBL" id="CP000480">
    <property type="protein sequence ID" value="ABK75349.1"/>
    <property type="molecule type" value="Genomic_DNA"/>
</dbReference>
<dbReference type="EMBL" id="CP001663">
    <property type="protein sequence ID" value="AFP39424.1"/>
    <property type="molecule type" value="Genomic_DNA"/>
</dbReference>
<dbReference type="RefSeq" id="WP_003894417.1">
    <property type="nucleotide sequence ID" value="NZ_SIJM01000002.1"/>
</dbReference>
<dbReference type="RefSeq" id="YP_887352.1">
    <property type="nucleotide sequence ID" value="NC_008596.1"/>
</dbReference>
<dbReference type="SMR" id="A0QWR4"/>
<dbReference type="STRING" id="246196.MSMEG_3035"/>
<dbReference type="PaxDb" id="246196-MSMEI_2960"/>
<dbReference type="GeneID" id="93457814"/>
<dbReference type="KEGG" id="msb:LJ00_15105"/>
<dbReference type="KEGG" id="msg:MSMEI_2960"/>
<dbReference type="KEGG" id="msm:MSMEG_3035"/>
<dbReference type="PATRIC" id="fig|246196.19.peg.2997"/>
<dbReference type="eggNOG" id="COG0231">
    <property type="taxonomic scope" value="Bacteria"/>
</dbReference>
<dbReference type="OrthoDB" id="9801844at2"/>
<dbReference type="UniPathway" id="UPA00345"/>
<dbReference type="Proteomes" id="UP000000757">
    <property type="component" value="Chromosome"/>
</dbReference>
<dbReference type="Proteomes" id="UP000006158">
    <property type="component" value="Chromosome"/>
</dbReference>
<dbReference type="GO" id="GO:0005737">
    <property type="term" value="C:cytoplasm"/>
    <property type="evidence" value="ECO:0007669"/>
    <property type="project" value="UniProtKB-SubCell"/>
</dbReference>
<dbReference type="GO" id="GO:0003746">
    <property type="term" value="F:translation elongation factor activity"/>
    <property type="evidence" value="ECO:0007669"/>
    <property type="project" value="UniProtKB-UniRule"/>
</dbReference>
<dbReference type="GO" id="GO:0043043">
    <property type="term" value="P:peptide biosynthetic process"/>
    <property type="evidence" value="ECO:0007669"/>
    <property type="project" value="InterPro"/>
</dbReference>
<dbReference type="CDD" id="cd04470">
    <property type="entry name" value="S1_EF-P_repeat_1"/>
    <property type="match status" value="1"/>
</dbReference>
<dbReference type="CDD" id="cd05794">
    <property type="entry name" value="S1_EF-P_repeat_2"/>
    <property type="match status" value="1"/>
</dbReference>
<dbReference type="FunFam" id="2.30.30.30:FF:000003">
    <property type="entry name" value="Elongation factor P"/>
    <property type="match status" value="1"/>
</dbReference>
<dbReference type="FunFam" id="2.40.50.140:FF:000004">
    <property type="entry name" value="Elongation factor P"/>
    <property type="match status" value="1"/>
</dbReference>
<dbReference type="FunFam" id="2.40.50.140:FF:000009">
    <property type="entry name" value="Elongation factor P"/>
    <property type="match status" value="1"/>
</dbReference>
<dbReference type="Gene3D" id="2.30.30.30">
    <property type="match status" value="1"/>
</dbReference>
<dbReference type="Gene3D" id="2.40.50.140">
    <property type="entry name" value="Nucleic acid-binding proteins"/>
    <property type="match status" value="2"/>
</dbReference>
<dbReference type="HAMAP" id="MF_00141">
    <property type="entry name" value="EF_P"/>
    <property type="match status" value="1"/>
</dbReference>
<dbReference type="InterPro" id="IPR015365">
    <property type="entry name" value="Elong-fact-P_C"/>
</dbReference>
<dbReference type="InterPro" id="IPR012340">
    <property type="entry name" value="NA-bd_OB-fold"/>
</dbReference>
<dbReference type="InterPro" id="IPR014722">
    <property type="entry name" value="Rib_uL2_dom2"/>
</dbReference>
<dbReference type="InterPro" id="IPR020599">
    <property type="entry name" value="Transl_elong_fac_P/YeiP"/>
</dbReference>
<dbReference type="InterPro" id="IPR013185">
    <property type="entry name" value="Transl_elong_KOW-like"/>
</dbReference>
<dbReference type="InterPro" id="IPR001059">
    <property type="entry name" value="Transl_elong_P/YeiP_cen"/>
</dbReference>
<dbReference type="InterPro" id="IPR013852">
    <property type="entry name" value="Transl_elong_P/YeiP_CS"/>
</dbReference>
<dbReference type="InterPro" id="IPR011768">
    <property type="entry name" value="Transl_elongation_fac_P"/>
</dbReference>
<dbReference type="InterPro" id="IPR008991">
    <property type="entry name" value="Translation_prot_SH3-like_sf"/>
</dbReference>
<dbReference type="NCBIfam" id="TIGR00038">
    <property type="entry name" value="efp"/>
    <property type="match status" value="1"/>
</dbReference>
<dbReference type="NCBIfam" id="NF001810">
    <property type="entry name" value="PRK00529.1"/>
    <property type="match status" value="1"/>
</dbReference>
<dbReference type="PANTHER" id="PTHR30053">
    <property type="entry name" value="ELONGATION FACTOR P"/>
    <property type="match status" value="1"/>
</dbReference>
<dbReference type="PANTHER" id="PTHR30053:SF12">
    <property type="entry name" value="ELONGATION FACTOR P (EF-P) FAMILY PROTEIN"/>
    <property type="match status" value="1"/>
</dbReference>
<dbReference type="Pfam" id="PF01132">
    <property type="entry name" value="EFP"/>
    <property type="match status" value="1"/>
</dbReference>
<dbReference type="Pfam" id="PF08207">
    <property type="entry name" value="EFP_N"/>
    <property type="match status" value="1"/>
</dbReference>
<dbReference type="Pfam" id="PF09285">
    <property type="entry name" value="Elong-fact-P_C"/>
    <property type="match status" value="1"/>
</dbReference>
<dbReference type="PIRSF" id="PIRSF005901">
    <property type="entry name" value="EF-P"/>
    <property type="match status" value="1"/>
</dbReference>
<dbReference type="SMART" id="SM01185">
    <property type="entry name" value="EFP"/>
    <property type="match status" value="1"/>
</dbReference>
<dbReference type="SMART" id="SM00841">
    <property type="entry name" value="Elong-fact-P_C"/>
    <property type="match status" value="1"/>
</dbReference>
<dbReference type="SUPFAM" id="SSF50249">
    <property type="entry name" value="Nucleic acid-binding proteins"/>
    <property type="match status" value="2"/>
</dbReference>
<dbReference type="SUPFAM" id="SSF50104">
    <property type="entry name" value="Translation proteins SH3-like domain"/>
    <property type="match status" value="1"/>
</dbReference>
<dbReference type="PROSITE" id="PS01275">
    <property type="entry name" value="EFP"/>
    <property type="match status" value="1"/>
</dbReference>
<reference key="1">
    <citation type="submission" date="2006-10" db="EMBL/GenBank/DDBJ databases">
        <authorList>
            <person name="Fleischmann R.D."/>
            <person name="Dodson R.J."/>
            <person name="Haft D.H."/>
            <person name="Merkel J.S."/>
            <person name="Nelson W.C."/>
            <person name="Fraser C.M."/>
        </authorList>
    </citation>
    <scope>NUCLEOTIDE SEQUENCE [LARGE SCALE GENOMIC DNA]</scope>
    <source>
        <strain>ATCC 700084 / mc(2)155</strain>
    </source>
</reference>
<reference key="2">
    <citation type="journal article" date="2007" name="Genome Biol.">
        <title>Interrupted coding sequences in Mycobacterium smegmatis: authentic mutations or sequencing errors?</title>
        <authorList>
            <person name="Deshayes C."/>
            <person name="Perrodou E."/>
            <person name="Gallien S."/>
            <person name="Euphrasie D."/>
            <person name="Schaeffer C."/>
            <person name="Van-Dorsselaer A."/>
            <person name="Poch O."/>
            <person name="Lecompte O."/>
            <person name="Reyrat J.-M."/>
        </authorList>
    </citation>
    <scope>NUCLEOTIDE SEQUENCE [LARGE SCALE GENOMIC DNA]</scope>
    <source>
        <strain>ATCC 700084 / mc(2)155</strain>
    </source>
</reference>
<reference key="3">
    <citation type="journal article" date="2009" name="Genome Res.">
        <title>Ortho-proteogenomics: multiple proteomes investigation through orthology and a new MS-based protocol.</title>
        <authorList>
            <person name="Gallien S."/>
            <person name="Perrodou E."/>
            <person name="Carapito C."/>
            <person name="Deshayes C."/>
            <person name="Reyrat J.-M."/>
            <person name="Van Dorsselaer A."/>
            <person name="Poch O."/>
            <person name="Schaeffer C."/>
            <person name="Lecompte O."/>
        </authorList>
    </citation>
    <scope>NUCLEOTIDE SEQUENCE [LARGE SCALE GENOMIC DNA]</scope>
    <scope>IDENTIFICATION BY MASS SPECTROMETRY [LARGE SCALE ANALYSIS]</scope>
    <scope>CLEAVAGE OF INITIATOR METHIONINE</scope>
    <source>
        <strain>ATCC 700084 / mc(2)155</strain>
    </source>
</reference>
<organism>
    <name type="scientific">Mycolicibacterium smegmatis (strain ATCC 700084 / mc(2)155)</name>
    <name type="common">Mycobacterium smegmatis</name>
    <dbReference type="NCBI Taxonomy" id="246196"/>
    <lineage>
        <taxon>Bacteria</taxon>
        <taxon>Bacillati</taxon>
        <taxon>Actinomycetota</taxon>
        <taxon>Actinomycetes</taxon>
        <taxon>Mycobacteriales</taxon>
        <taxon>Mycobacteriaceae</taxon>
        <taxon>Mycolicibacterium</taxon>
    </lineage>
</organism>
<keyword id="KW-0963">Cytoplasm</keyword>
<keyword id="KW-0251">Elongation factor</keyword>
<keyword id="KW-0648">Protein biosynthesis</keyword>
<keyword id="KW-1185">Reference proteome</keyword>
<accession>A0QWR4</accession>
<accession>I7GAB6</accession>
<evidence type="ECO:0000255" key="1">
    <source>
        <dbReference type="HAMAP-Rule" id="MF_00141"/>
    </source>
</evidence>
<evidence type="ECO:0000269" key="2">
    <source>
    </source>
</evidence>
<feature type="initiator methionine" description="Removed" evidence="2">
    <location>
        <position position="1"/>
    </location>
</feature>
<feature type="chain" id="PRO_1000010782" description="Elongation factor P">
    <location>
        <begin position="2"/>
        <end position="187"/>
    </location>
</feature>
<gene>
    <name evidence="1" type="primary">efp</name>
    <name type="ordered locus">MSMEG_3035</name>
    <name type="ordered locus">MSMEI_2960</name>
</gene>